<dbReference type="EC" id="1.14.11.-" evidence="2"/>
<dbReference type="EMBL" id="CU329671">
    <property type="protein sequence ID" value="CAA18657.3"/>
    <property type="molecule type" value="Genomic_DNA"/>
</dbReference>
<dbReference type="EMBL" id="AB548892">
    <property type="protein sequence ID" value="BAI81891.1"/>
    <property type="molecule type" value="mRNA"/>
</dbReference>
<dbReference type="PIR" id="T39405">
    <property type="entry name" value="T39405"/>
</dbReference>
<dbReference type="RefSeq" id="NP_596553.3">
    <property type="nucleotide sequence ID" value="NM_001022474.3"/>
</dbReference>
<dbReference type="SMR" id="O60066"/>
<dbReference type="BioGRID" id="276479">
    <property type="interactions" value="8"/>
</dbReference>
<dbReference type="FunCoup" id="O60066">
    <property type="interactions" value="534"/>
</dbReference>
<dbReference type="STRING" id="284812.O60066"/>
<dbReference type="PaxDb" id="4896-SPBC13G1.04c.1"/>
<dbReference type="GeneID" id="2539935"/>
<dbReference type="KEGG" id="spo:2539935"/>
<dbReference type="PomBase" id="SPBC13G1.04c">
    <property type="gene designation" value="abh1"/>
</dbReference>
<dbReference type="eggNOG" id="KOG2731">
    <property type="taxonomic scope" value="Eukaryota"/>
</dbReference>
<dbReference type="HOGENOM" id="CLU_029471_0_1_1"/>
<dbReference type="InParanoid" id="O60066"/>
<dbReference type="OMA" id="CEVIRLR"/>
<dbReference type="PRO" id="PR:O60066"/>
<dbReference type="Proteomes" id="UP000002485">
    <property type="component" value="Chromosome II"/>
</dbReference>
<dbReference type="GO" id="GO:0005737">
    <property type="term" value="C:cytoplasm"/>
    <property type="evidence" value="ECO:0000314"/>
    <property type="project" value="PomBase"/>
</dbReference>
<dbReference type="GO" id="GO:0005829">
    <property type="term" value="C:cytosol"/>
    <property type="evidence" value="ECO:0007005"/>
    <property type="project" value="PomBase"/>
</dbReference>
<dbReference type="GO" id="GO:0005634">
    <property type="term" value="C:nucleus"/>
    <property type="evidence" value="ECO:0000314"/>
    <property type="project" value="PomBase"/>
</dbReference>
<dbReference type="GO" id="GO:0046872">
    <property type="term" value="F:metal ion binding"/>
    <property type="evidence" value="ECO:0007669"/>
    <property type="project" value="UniProtKB-KW"/>
</dbReference>
<dbReference type="GO" id="GO:1990984">
    <property type="term" value="F:tRNA demethylase activity"/>
    <property type="evidence" value="ECO:0000250"/>
    <property type="project" value="PomBase"/>
</dbReference>
<dbReference type="GO" id="GO:0006281">
    <property type="term" value="P:DNA repair"/>
    <property type="evidence" value="ECO:0007669"/>
    <property type="project" value="UniProtKB-KW"/>
</dbReference>
<dbReference type="GO" id="GO:1990983">
    <property type="term" value="P:regulation of translational initiation by tRNA modification"/>
    <property type="evidence" value="ECO:0000250"/>
    <property type="project" value="PomBase"/>
</dbReference>
<dbReference type="FunFam" id="2.60.120.590:FF:000058">
    <property type="entry name" value="Alpha-ketoglutarate-dependent dioxygenase abh1"/>
    <property type="match status" value="1"/>
</dbReference>
<dbReference type="Gene3D" id="2.60.120.590">
    <property type="entry name" value="Alpha-ketoglutarate-dependent dioxygenase AlkB-like"/>
    <property type="match status" value="1"/>
</dbReference>
<dbReference type="InterPro" id="IPR004574">
    <property type="entry name" value="Alkb"/>
</dbReference>
<dbReference type="InterPro" id="IPR027450">
    <property type="entry name" value="AlkB-like"/>
</dbReference>
<dbReference type="InterPro" id="IPR037151">
    <property type="entry name" value="AlkB-like_sf"/>
</dbReference>
<dbReference type="InterPro" id="IPR005123">
    <property type="entry name" value="Oxoglu/Fe-dep_dioxygenase_dom"/>
</dbReference>
<dbReference type="NCBIfam" id="TIGR00568">
    <property type="entry name" value="alkb"/>
    <property type="match status" value="1"/>
</dbReference>
<dbReference type="PANTHER" id="PTHR16557">
    <property type="entry name" value="ALKYLATED DNA REPAIR PROTEIN ALKB-RELATED"/>
    <property type="match status" value="1"/>
</dbReference>
<dbReference type="PANTHER" id="PTHR16557:SF2">
    <property type="entry name" value="NUCLEIC ACID DIOXYGENASE ALKBH1"/>
    <property type="match status" value="1"/>
</dbReference>
<dbReference type="Pfam" id="PF13532">
    <property type="entry name" value="2OG-FeII_Oxy_2"/>
    <property type="match status" value="1"/>
</dbReference>
<dbReference type="SUPFAM" id="SSF51197">
    <property type="entry name" value="Clavaminate synthase-like"/>
    <property type="match status" value="1"/>
</dbReference>
<dbReference type="PROSITE" id="PS51471">
    <property type="entry name" value="FE2OG_OXY"/>
    <property type="match status" value="1"/>
</dbReference>
<protein>
    <recommendedName>
        <fullName evidence="5">tRNA demethylase abh1</fullName>
        <ecNumber evidence="2">1.14.11.-</ecNumber>
    </recommendedName>
    <alternativeName>
        <fullName>Alkylated DNA repair protein alkB homolog</fullName>
    </alternativeName>
    <alternativeName>
        <fullName>Alpha-ketoglutarate-dependent dioxygenase abh1</fullName>
    </alternativeName>
</protein>
<gene>
    <name type="primary">abh1</name>
    <name type="ORF">SPBC13G1.04c</name>
</gene>
<proteinExistence type="evidence at transcript level"/>
<feature type="chain" id="PRO_0000066669" description="tRNA demethylase abh1">
    <location>
        <begin position="1"/>
        <end position="302"/>
    </location>
</feature>
<feature type="domain" description="Fe2OG dioxygenase" evidence="3">
    <location>
        <begin position="187"/>
        <end position="299"/>
    </location>
</feature>
<feature type="binding site" evidence="1">
    <location>
        <position position="142"/>
    </location>
    <ligand>
        <name>substrate</name>
    </ligand>
</feature>
<feature type="binding site" evidence="1">
    <location>
        <begin position="149"/>
        <end position="151"/>
    </location>
    <ligand>
        <name>substrate</name>
    </ligand>
</feature>
<feature type="binding site" evidence="1">
    <location>
        <begin position="194"/>
        <end position="196"/>
    </location>
    <ligand>
        <name>2-oxoglutarate</name>
        <dbReference type="ChEBI" id="CHEBI:16810"/>
    </ligand>
</feature>
<feature type="binding site" evidence="3">
    <location>
        <position position="205"/>
    </location>
    <ligand>
        <name>Fe cation</name>
        <dbReference type="ChEBI" id="CHEBI:24875"/>
        <note>catalytic</note>
    </ligand>
</feature>
<feature type="binding site" evidence="3">
    <location>
        <position position="207"/>
    </location>
    <ligand>
        <name>Fe cation</name>
        <dbReference type="ChEBI" id="CHEBI:24875"/>
        <note>catalytic</note>
    </ligand>
</feature>
<feature type="binding site" evidence="1">
    <location>
        <position position="235"/>
    </location>
    <ligand>
        <name>substrate</name>
    </ligand>
</feature>
<feature type="binding site" evidence="3">
    <location>
        <position position="261"/>
    </location>
    <ligand>
        <name>Fe cation</name>
        <dbReference type="ChEBI" id="CHEBI:24875"/>
        <note>catalytic</note>
    </ligand>
</feature>
<feature type="binding site" evidence="1">
    <location>
        <begin position="290"/>
        <end position="296"/>
    </location>
    <ligand>
        <name>2-oxoglutarate</name>
        <dbReference type="ChEBI" id="CHEBI:16810"/>
    </ligand>
</feature>
<evidence type="ECO:0000250" key="1"/>
<evidence type="ECO:0000250" key="2">
    <source>
        <dbReference type="UniProtKB" id="Q13686"/>
    </source>
</evidence>
<evidence type="ECO:0000255" key="3">
    <source>
        <dbReference type="PROSITE-ProRule" id="PRU00805"/>
    </source>
</evidence>
<evidence type="ECO:0000269" key="4">
    <source>
    </source>
</evidence>
<evidence type="ECO:0000305" key="5"/>
<reference key="1">
    <citation type="journal article" date="2002" name="Nature">
        <title>The genome sequence of Schizosaccharomyces pombe.</title>
        <authorList>
            <person name="Wood V."/>
            <person name="Gwilliam R."/>
            <person name="Rajandream M.A."/>
            <person name="Lyne M.H."/>
            <person name="Lyne R."/>
            <person name="Stewart A."/>
            <person name="Sgouros J.G."/>
            <person name="Peat N."/>
            <person name="Hayles J."/>
            <person name="Baker S.G."/>
            <person name="Basham D."/>
            <person name="Bowman S."/>
            <person name="Brooks K."/>
            <person name="Brown D."/>
            <person name="Brown S."/>
            <person name="Chillingworth T."/>
            <person name="Churcher C.M."/>
            <person name="Collins M."/>
            <person name="Connor R."/>
            <person name="Cronin A."/>
            <person name="Davis P."/>
            <person name="Feltwell T."/>
            <person name="Fraser A."/>
            <person name="Gentles S."/>
            <person name="Goble A."/>
            <person name="Hamlin N."/>
            <person name="Harris D.E."/>
            <person name="Hidalgo J."/>
            <person name="Hodgson G."/>
            <person name="Holroyd S."/>
            <person name="Hornsby T."/>
            <person name="Howarth S."/>
            <person name="Huckle E.J."/>
            <person name="Hunt S."/>
            <person name="Jagels K."/>
            <person name="James K.D."/>
            <person name="Jones L."/>
            <person name="Jones M."/>
            <person name="Leather S."/>
            <person name="McDonald S."/>
            <person name="McLean J."/>
            <person name="Mooney P."/>
            <person name="Moule S."/>
            <person name="Mungall K.L."/>
            <person name="Murphy L.D."/>
            <person name="Niblett D."/>
            <person name="Odell C."/>
            <person name="Oliver K."/>
            <person name="O'Neil S."/>
            <person name="Pearson D."/>
            <person name="Quail M.A."/>
            <person name="Rabbinowitsch E."/>
            <person name="Rutherford K.M."/>
            <person name="Rutter S."/>
            <person name="Saunders D."/>
            <person name="Seeger K."/>
            <person name="Sharp S."/>
            <person name="Skelton J."/>
            <person name="Simmonds M.N."/>
            <person name="Squares R."/>
            <person name="Squares S."/>
            <person name="Stevens K."/>
            <person name="Taylor K."/>
            <person name="Taylor R.G."/>
            <person name="Tivey A."/>
            <person name="Walsh S.V."/>
            <person name="Warren T."/>
            <person name="Whitehead S."/>
            <person name="Woodward J.R."/>
            <person name="Volckaert G."/>
            <person name="Aert R."/>
            <person name="Robben J."/>
            <person name="Grymonprez B."/>
            <person name="Weltjens I."/>
            <person name="Vanstreels E."/>
            <person name="Rieger M."/>
            <person name="Schaefer M."/>
            <person name="Mueller-Auer S."/>
            <person name="Gabel C."/>
            <person name="Fuchs M."/>
            <person name="Duesterhoeft A."/>
            <person name="Fritzc C."/>
            <person name="Holzer E."/>
            <person name="Moestl D."/>
            <person name="Hilbert H."/>
            <person name="Borzym K."/>
            <person name="Langer I."/>
            <person name="Beck A."/>
            <person name="Lehrach H."/>
            <person name="Reinhardt R."/>
            <person name="Pohl T.M."/>
            <person name="Eger P."/>
            <person name="Zimmermann W."/>
            <person name="Wedler H."/>
            <person name="Wambutt R."/>
            <person name="Purnelle B."/>
            <person name="Goffeau A."/>
            <person name="Cadieu E."/>
            <person name="Dreano S."/>
            <person name="Gloux S."/>
            <person name="Lelaure V."/>
            <person name="Mottier S."/>
            <person name="Galibert F."/>
            <person name="Aves S.J."/>
            <person name="Xiang Z."/>
            <person name="Hunt C."/>
            <person name="Moore K."/>
            <person name="Hurst S.M."/>
            <person name="Lucas M."/>
            <person name="Rochet M."/>
            <person name="Gaillardin C."/>
            <person name="Tallada V.A."/>
            <person name="Garzon A."/>
            <person name="Thode G."/>
            <person name="Daga R.R."/>
            <person name="Cruzado L."/>
            <person name="Jimenez J."/>
            <person name="Sanchez M."/>
            <person name="del Rey F."/>
            <person name="Benito J."/>
            <person name="Dominguez A."/>
            <person name="Revuelta J.L."/>
            <person name="Moreno S."/>
            <person name="Armstrong J."/>
            <person name="Forsburg S.L."/>
            <person name="Cerutti L."/>
            <person name="Lowe T."/>
            <person name="McCombie W.R."/>
            <person name="Paulsen I."/>
            <person name="Potashkin J."/>
            <person name="Shpakovski G.V."/>
            <person name="Ussery D."/>
            <person name="Barrell B.G."/>
            <person name="Nurse P."/>
        </authorList>
    </citation>
    <scope>NUCLEOTIDE SEQUENCE [LARGE SCALE GENOMIC DNA]</scope>
    <source>
        <strain>972 / ATCC 24843</strain>
    </source>
</reference>
<reference key="2">
    <citation type="journal article" date="2011" name="Science">
        <title>Comparative functional genomics of the fission yeasts.</title>
        <authorList>
            <person name="Rhind N."/>
            <person name="Chen Z."/>
            <person name="Yassour M."/>
            <person name="Thompson D.A."/>
            <person name="Haas B.J."/>
            <person name="Habib N."/>
            <person name="Wapinski I."/>
            <person name="Roy S."/>
            <person name="Lin M.F."/>
            <person name="Heiman D.I."/>
            <person name="Young S.K."/>
            <person name="Furuya K."/>
            <person name="Guo Y."/>
            <person name="Pidoux A."/>
            <person name="Chen H.M."/>
            <person name="Robbertse B."/>
            <person name="Goldberg J.M."/>
            <person name="Aoki K."/>
            <person name="Bayne E.H."/>
            <person name="Berlin A.M."/>
            <person name="Desjardins C.A."/>
            <person name="Dobbs E."/>
            <person name="Dukaj L."/>
            <person name="Fan L."/>
            <person name="FitzGerald M.G."/>
            <person name="French C."/>
            <person name="Gujja S."/>
            <person name="Hansen K."/>
            <person name="Keifenheim D."/>
            <person name="Levin J.Z."/>
            <person name="Mosher R.A."/>
            <person name="Mueller C.A."/>
            <person name="Pfiffner J."/>
            <person name="Priest M."/>
            <person name="Russ C."/>
            <person name="Smialowska A."/>
            <person name="Swoboda P."/>
            <person name="Sykes S.M."/>
            <person name="Vaughn M."/>
            <person name="Vengrova S."/>
            <person name="Yoder R."/>
            <person name="Zeng Q."/>
            <person name="Allshire R."/>
            <person name="Baulcombe D."/>
            <person name="Birren B.W."/>
            <person name="Brown W."/>
            <person name="Ekwall K."/>
            <person name="Kellis M."/>
            <person name="Leatherwood J."/>
            <person name="Levin H."/>
            <person name="Margalit H."/>
            <person name="Martienssen R."/>
            <person name="Nieduszynski C.A."/>
            <person name="Spatafora J.W."/>
            <person name="Friedman N."/>
            <person name="Dalgaard J.Z."/>
            <person name="Baumann P."/>
            <person name="Niki H."/>
            <person name="Regev A."/>
            <person name="Nusbaum C."/>
        </authorList>
    </citation>
    <scope>REVISION OF GENE MODEL</scope>
</reference>
<reference key="3">
    <citation type="submission" date="2010-03" db="EMBL/GenBank/DDBJ databases">
        <title>cDNA cloning of an AlkB homolog from Schizosaccharomyces pombe.</title>
        <authorList>
            <person name="Inatani S."/>
            <person name="Kanamitsu K."/>
            <person name="Ikeda S."/>
        </authorList>
    </citation>
    <scope>NUCLEOTIDE SEQUENCE [MRNA] OF 6-302</scope>
</reference>
<reference key="4">
    <citation type="journal article" date="2012" name="DNA Repair">
        <title>The Schizosaccharomyces pombe AlkB homolog Abh1 exhibits AP lyase activity but no demethylase activity.</title>
        <authorList>
            <person name="Korvald H."/>
            <person name="Falnes P.O."/>
            <person name="Laerdahl J.K."/>
            <person name="Bjoeraas M."/>
            <person name="Alseth I."/>
        </authorList>
    </citation>
    <scope>FUNCTION</scope>
    <scope>SUBCELLULAR LOCATION</scope>
    <scope>DISRUPTION PHENOTYPE</scope>
</reference>
<accession>O60066</accession>
<accession>D3KZ45</accession>
<keyword id="KW-0963">Cytoplasm</keyword>
<keyword id="KW-0223">Dioxygenase</keyword>
<keyword id="KW-0408">Iron</keyword>
<keyword id="KW-0479">Metal-binding</keyword>
<keyword id="KW-0539">Nucleus</keyword>
<keyword id="KW-0560">Oxidoreductase</keyword>
<keyword id="KW-1185">Reference proteome</keyword>
<keyword id="KW-0810">Translation regulation</keyword>
<name>ALKB1_SCHPO</name>
<organism>
    <name type="scientific">Schizosaccharomyces pombe (strain 972 / ATCC 24843)</name>
    <name type="common">Fission yeast</name>
    <dbReference type="NCBI Taxonomy" id="284812"/>
    <lineage>
        <taxon>Eukaryota</taxon>
        <taxon>Fungi</taxon>
        <taxon>Dikarya</taxon>
        <taxon>Ascomycota</taxon>
        <taxon>Taphrinomycotina</taxon>
        <taxon>Schizosaccharomycetes</taxon>
        <taxon>Schizosaccharomycetales</taxon>
        <taxon>Schizosaccharomycetaceae</taxon>
        <taxon>Schizosaccharomyces</taxon>
    </lineage>
</organism>
<comment type="function">
    <text evidence="2 4">Dioxygenase that acts as on nucleic acids, such as DNA and tRNA. Requires molecular oxygen, alpha-ketoglutarate and iron. Mainly acts as a tRNA demethylase by removing N(1)-methyladenine from various tRNAs, with a preference for N(1)-methyladenine at position 58 (m1A58) present on a stem loop structure of tRNAs. Acts as a regulator of translation initiation and elongation (By similarity). Does not appear to possess DNA repair activity; no activity towards methylated DNA or etheno adducts (PubMed:22365419). Exhibits a weak and unstable DNA lyase activity; this activity is probably not biologically significant and proceeds by a mechanism different from the classical dioxygenase reaction as it does not require 2-oxoglutarate or iron (PubMed:22365419).</text>
</comment>
<comment type="catalytic activity">
    <reaction evidence="2">
        <text>an N(1)-methyladenosine in tRNA + 2-oxoglutarate + O2 = an adenosine in tRNA + formaldehyde + succinate + CO2</text>
        <dbReference type="Rhea" id="RHEA:54576"/>
        <dbReference type="Rhea" id="RHEA-COMP:10242"/>
        <dbReference type="Rhea" id="RHEA-COMP:12312"/>
        <dbReference type="ChEBI" id="CHEBI:15379"/>
        <dbReference type="ChEBI" id="CHEBI:16526"/>
        <dbReference type="ChEBI" id="CHEBI:16810"/>
        <dbReference type="ChEBI" id="CHEBI:16842"/>
        <dbReference type="ChEBI" id="CHEBI:30031"/>
        <dbReference type="ChEBI" id="CHEBI:74411"/>
        <dbReference type="ChEBI" id="CHEBI:74491"/>
    </reaction>
</comment>
<comment type="catalytic activity">
    <reaction evidence="2">
        <text>N(1)-methyladenosine(58) in tRNA + 2-oxoglutarate + O2 = adenosine(58) in tRNA + formaldehyde + succinate + CO2</text>
        <dbReference type="Rhea" id="RHEA:79019"/>
        <dbReference type="Rhea" id="RHEA-COMP:10365"/>
        <dbReference type="Rhea" id="RHEA-COMP:10366"/>
        <dbReference type="ChEBI" id="CHEBI:15379"/>
        <dbReference type="ChEBI" id="CHEBI:16526"/>
        <dbReference type="ChEBI" id="CHEBI:16810"/>
        <dbReference type="ChEBI" id="CHEBI:16842"/>
        <dbReference type="ChEBI" id="CHEBI:30031"/>
        <dbReference type="ChEBI" id="CHEBI:74411"/>
        <dbReference type="ChEBI" id="CHEBI:74491"/>
    </reaction>
</comment>
<comment type="cofactor">
    <cofactor evidence="2">
        <name>Fe(2+)</name>
        <dbReference type="ChEBI" id="CHEBI:29033"/>
    </cofactor>
    <text>Binds 1 Fe(2+) ion per subunit.</text>
</comment>
<comment type="subcellular location">
    <subcellularLocation>
        <location evidence="4">Cytoplasm</location>
    </subcellularLocation>
    <subcellularLocation>
        <location evidence="4">Nucleus</location>
    </subcellularLocation>
</comment>
<comment type="disruption phenotype">
    <text evidence="4">No sensitivity to methyl methanesulfonate (MMS).</text>
</comment>
<comment type="similarity">
    <text evidence="5">Belongs to the alkB family.</text>
</comment>
<sequence length="302" mass="34348">MLAGNMEQANVFRLEEKRYKCRADTIPDMSEVLDPNDPQSFGFEALVEIKPRVFSFQKAPGLLILKNYVSSELQMQLLKSIMFTQIQDPENKTNLSPFYQLPLGNDSIWRRYYNGDGESIIDGLGETKPLTVDRLVHKKLRWVTLGEQYDWTTKEYPDPSKSPGFPKDLGDFVEKVVKESTDFLHWKAEAAIVNFYSPGDTLSAHIDESEEDLTLPLISLSMGLDCIYLIGTESRSEKPSALRLHSGDVVIMTGTSRKAFHAVPKIIPNSTPNYLLTGNKAWDGWISRKRVNFNVRQVRPSR</sequence>